<reference key="1">
    <citation type="journal article" date="2003" name="Science">
        <title>A genomic view of the human-Bacteroides thetaiotaomicron symbiosis.</title>
        <authorList>
            <person name="Xu J."/>
            <person name="Bjursell M.K."/>
            <person name="Himrod J."/>
            <person name="Deng S."/>
            <person name="Carmichael L.K."/>
            <person name="Chiang H.C."/>
            <person name="Hooper L.V."/>
            <person name="Gordon J.I."/>
        </authorList>
    </citation>
    <scope>NUCLEOTIDE SEQUENCE [LARGE SCALE GENOMIC DNA]</scope>
    <source>
        <strain>ATCC 29148 / DSM 2079 / JCM 5827 / CCUG 10774 / NCTC 10582 / VPI-5482 / E50</strain>
    </source>
</reference>
<feature type="chain" id="PRO_0000164523" description="D-aminoacyl-tRNA deacylase">
    <location>
        <begin position="1"/>
        <end position="150"/>
    </location>
</feature>
<feature type="short sequence motif" description="Gly-cisPro motif, important for rejection of L-amino acids" evidence="1">
    <location>
        <begin position="138"/>
        <end position="139"/>
    </location>
</feature>
<dbReference type="EC" id="3.1.1.96" evidence="1"/>
<dbReference type="EMBL" id="AE015928">
    <property type="protein sequence ID" value="AAO78371.1"/>
    <property type="molecule type" value="Genomic_DNA"/>
</dbReference>
<dbReference type="RefSeq" id="NP_812177.1">
    <property type="nucleotide sequence ID" value="NC_004663.1"/>
</dbReference>
<dbReference type="RefSeq" id="WP_011108726.1">
    <property type="nucleotide sequence ID" value="NC_004663.1"/>
</dbReference>
<dbReference type="SMR" id="Q8A2P0"/>
<dbReference type="FunCoup" id="Q8A2P0">
    <property type="interactions" value="434"/>
</dbReference>
<dbReference type="STRING" id="226186.BT_3265"/>
<dbReference type="PaxDb" id="226186-BT_3265"/>
<dbReference type="EnsemblBacteria" id="AAO78371">
    <property type="protein sequence ID" value="AAO78371"/>
    <property type="gene ID" value="BT_3265"/>
</dbReference>
<dbReference type="GeneID" id="60924445"/>
<dbReference type="KEGG" id="bth:BT_3265"/>
<dbReference type="PATRIC" id="fig|226186.12.peg.3329"/>
<dbReference type="eggNOG" id="COG1490">
    <property type="taxonomic scope" value="Bacteria"/>
</dbReference>
<dbReference type="HOGENOM" id="CLU_076901_1_0_10"/>
<dbReference type="InParanoid" id="Q8A2P0"/>
<dbReference type="OrthoDB" id="9801395at2"/>
<dbReference type="Proteomes" id="UP000001414">
    <property type="component" value="Chromosome"/>
</dbReference>
<dbReference type="GO" id="GO:0005737">
    <property type="term" value="C:cytoplasm"/>
    <property type="evidence" value="ECO:0000318"/>
    <property type="project" value="GO_Central"/>
</dbReference>
<dbReference type="GO" id="GO:0051500">
    <property type="term" value="F:D-tyrosyl-tRNA(Tyr) deacylase activity"/>
    <property type="evidence" value="ECO:0000318"/>
    <property type="project" value="GO_Central"/>
</dbReference>
<dbReference type="GO" id="GO:0106026">
    <property type="term" value="F:Gly-tRNA(Ala) deacylase activity"/>
    <property type="evidence" value="ECO:0007669"/>
    <property type="project" value="UniProtKB-UniRule"/>
</dbReference>
<dbReference type="GO" id="GO:0043908">
    <property type="term" value="F:Ser(Gly)-tRNA(Ala) hydrolase activity"/>
    <property type="evidence" value="ECO:0007669"/>
    <property type="project" value="UniProtKB-UniRule"/>
</dbReference>
<dbReference type="GO" id="GO:0000049">
    <property type="term" value="F:tRNA binding"/>
    <property type="evidence" value="ECO:0007669"/>
    <property type="project" value="UniProtKB-UniRule"/>
</dbReference>
<dbReference type="GO" id="GO:0019478">
    <property type="term" value="P:D-amino acid catabolic process"/>
    <property type="evidence" value="ECO:0007669"/>
    <property type="project" value="UniProtKB-UniRule"/>
</dbReference>
<dbReference type="GO" id="GO:0006399">
    <property type="term" value="P:tRNA metabolic process"/>
    <property type="evidence" value="ECO:0000318"/>
    <property type="project" value="GO_Central"/>
</dbReference>
<dbReference type="FunFam" id="3.50.80.10:FF:000001">
    <property type="entry name" value="D-aminoacyl-tRNA deacylase"/>
    <property type="match status" value="1"/>
</dbReference>
<dbReference type="Gene3D" id="3.50.80.10">
    <property type="entry name" value="D-tyrosyl-tRNA(Tyr) deacylase"/>
    <property type="match status" value="1"/>
</dbReference>
<dbReference type="HAMAP" id="MF_00518">
    <property type="entry name" value="Deacylase_Dtd"/>
    <property type="match status" value="1"/>
</dbReference>
<dbReference type="InterPro" id="IPR003732">
    <property type="entry name" value="Daa-tRNA_deacyls_DTD"/>
</dbReference>
<dbReference type="InterPro" id="IPR023509">
    <property type="entry name" value="DTD-like_sf"/>
</dbReference>
<dbReference type="NCBIfam" id="TIGR00256">
    <property type="entry name" value="D-aminoacyl-tRNA deacylase"/>
    <property type="match status" value="1"/>
</dbReference>
<dbReference type="PANTHER" id="PTHR10472:SF5">
    <property type="entry name" value="D-AMINOACYL-TRNA DEACYLASE 1"/>
    <property type="match status" value="1"/>
</dbReference>
<dbReference type="PANTHER" id="PTHR10472">
    <property type="entry name" value="D-TYROSYL-TRNA TYR DEACYLASE"/>
    <property type="match status" value="1"/>
</dbReference>
<dbReference type="Pfam" id="PF02580">
    <property type="entry name" value="Tyr_Deacylase"/>
    <property type="match status" value="1"/>
</dbReference>
<dbReference type="SUPFAM" id="SSF69500">
    <property type="entry name" value="DTD-like"/>
    <property type="match status" value="1"/>
</dbReference>
<sequence length="150" mass="16489">MRIVVQRVSHASVTIEGQCKSSIGKGMLILVGIEESDGQEDIDWLCKKIVNLRIFDDESGVMNKSILEDGGEILVISQFTLHASTKKGNRPSYIKAAKPEISVPLYERFCKDLSRALGKEIGTGTFGADMKVELLNDGPVTICMDTKNKE</sequence>
<keyword id="KW-0963">Cytoplasm</keyword>
<keyword id="KW-0378">Hydrolase</keyword>
<keyword id="KW-1185">Reference proteome</keyword>
<keyword id="KW-0694">RNA-binding</keyword>
<keyword id="KW-0820">tRNA-binding</keyword>
<name>DTD_BACTN</name>
<proteinExistence type="inferred from homology"/>
<protein>
    <recommendedName>
        <fullName evidence="1">D-aminoacyl-tRNA deacylase</fullName>
        <shortName evidence="1">DTD</shortName>
        <ecNumber evidence="1">3.1.1.96</ecNumber>
    </recommendedName>
    <alternativeName>
        <fullName evidence="1">Gly-tRNA(Ala) deacylase</fullName>
    </alternativeName>
</protein>
<comment type="function">
    <text evidence="1">An aminoacyl-tRNA editing enzyme that deacylates mischarged D-aminoacyl-tRNAs. Also deacylates mischarged glycyl-tRNA(Ala), protecting cells against glycine mischarging by AlaRS. Acts via tRNA-based rather than protein-based catalysis; rejects L-amino acids rather than detecting D-amino acids in the active site. By recycling D-aminoacyl-tRNA to D-amino acids and free tRNA molecules, this enzyme counteracts the toxicity associated with the formation of D-aminoacyl-tRNA entities in vivo and helps enforce protein L-homochirality.</text>
</comment>
<comment type="catalytic activity">
    <reaction evidence="1">
        <text>glycyl-tRNA(Ala) + H2O = tRNA(Ala) + glycine + H(+)</text>
        <dbReference type="Rhea" id="RHEA:53744"/>
        <dbReference type="Rhea" id="RHEA-COMP:9657"/>
        <dbReference type="Rhea" id="RHEA-COMP:13640"/>
        <dbReference type="ChEBI" id="CHEBI:15377"/>
        <dbReference type="ChEBI" id="CHEBI:15378"/>
        <dbReference type="ChEBI" id="CHEBI:57305"/>
        <dbReference type="ChEBI" id="CHEBI:78442"/>
        <dbReference type="ChEBI" id="CHEBI:78522"/>
        <dbReference type="EC" id="3.1.1.96"/>
    </reaction>
</comment>
<comment type="catalytic activity">
    <reaction evidence="1">
        <text>a D-aminoacyl-tRNA + H2O = a tRNA + a D-alpha-amino acid + H(+)</text>
        <dbReference type="Rhea" id="RHEA:13953"/>
        <dbReference type="Rhea" id="RHEA-COMP:10123"/>
        <dbReference type="Rhea" id="RHEA-COMP:10124"/>
        <dbReference type="ChEBI" id="CHEBI:15377"/>
        <dbReference type="ChEBI" id="CHEBI:15378"/>
        <dbReference type="ChEBI" id="CHEBI:59871"/>
        <dbReference type="ChEBI" id="CHEBI:78442"/>
        <dbReference type="ChEBI" id="CHEBI:79333"/>
        <dbReference type="EC" id="3.1.1.96"/>
    </reaction>
</comment>
<comment type="subunit">
    <text evidence="1">Homodimer.</text>
</comment>
<comment type="subcellular location">
    <subcellularLocation>
        <location evidence="1">Cytoplasm</location>
    </subcellularLocation>
</comment>
<comment type="domain">
    <text evidence="1">A Gly-cisPro motif from one monomer fits into the active site of the other monomer to allow specific chiral rejection of L-amino acids.</text>
</comment>
<comment type="similarity">
    <text evidence="1">Belongs to the DTD family.</text>
</comment>
<gene>
    <name evidence="1" type="primary">dtd</name>
    <name type="ordered locus">BT_3265</name>
</gene>
<organism>
    <name type="scientific">Bacteroides thetaiotaomicron (strain ATCC 29148 / DSM 2079 / JCM 5827 / CCUG 10774 / NCTC 10582 / VPI-5482 / E50)</name>
    <dbReference type="NCBI Taxonomy" id="226186"/>
    <lineage>
        <taxon>Bacteria</taxon>
        <taxon>Pseudomonadati</taxon>
        <taxon>Bacteroidota</taxon>
        <taxon>Bacteroidia</taxon>
        <taxon>Bacteroidales</taxon>
        <taxon>Bacteroidaceae</taxon>
        <taxon>Bacteroides</taxon>
    </lineage>
</organism>
<evidence type="ECO:0000255" key="1">
    <source>
        <dbReference type="HAMAP-Rule" id="MF_00518"/>
    </source>
</evidence>
<accession>Q8A2P0</accession>